<proteinExistence type="evidence at transcript level"/>
<accession>Q202I6</accession>
<dbReference type="EMBL" id="DQ412132">
    <property type="protein sequence ID" value="ABD65408.1"/>
    <property type="molecule type" value="mRNA"/>
</dbReference>
<dbReference type="RefSeq" id="XP_035507425.1">
    <property type="nucleotide sequence ID" value="XM_035651532.1"/>
</dbReference>
<dbReference type="SMR" id="Q202I6"/>
<dbReference type="STRING" id="52904.ENSSMAP00000011768"/>
<dbReference type="Ensembl" id="ENSSMAT00000040106.1">
    <property type="protein sequence ID" value="ENSSMAP00000054503.1"/>
    <property type="gene ID" value="ENSSMAG00000026887.1"/>
</dbReference>
<dbReference type="GeneID" id="118320590"/>
<dbReference type="GeneTree" id="ENSGT00390000006051"/>
<dbReference type="OMA" id="CAMITEG"/>
<dbReference type="OrthoDB" id="10248936at2759"/>
<dbReference type="Proteomes" id="UP000694558">
    <property type="component" value="Chromosome 14"/>
</dbReference>
<dbReference type="GO" id="GO:0005737">
    <property type="term" value="C:cytoplasm"/>
    <property type="evidence" value="ECO:0007669"/>
    <property type="project" value="UniProtKB-SubCell"/>
</dbReference>
<dbReference type="GO" id="GO:0005509">
    <property type="term" value="F:calcium ion binding"/>
    <property type="evidence" value="ECO:0007669"/>
    <property type="project" value="TreeGrafter"/>
</dbReference>
<dbReference type="FunFam" id="2.170.150.10:FF:000002">
    <property type="entry name" value="Translationally-controlled tumor protein homolog"/>
    <property type="match status" value="1"/>
</dbReference>
<dbReference type="Gene3D" id="2.170.150.10">
    <property type="entry name" value="Metal Binding Protein, Guanine Nucleotide Exchange Factor, Chain A"/>
    <property type="match status" value="1"/>
</dbReference>
<dbReference type="InterPro" id="IPR011057">
    <property type="entry name" value="Mss4-like_sf"/>
</dbReference>
<dbReference type="InterPro" id="IPR011323">
    <property type="entry name" value="Mss4/transl-control_tumour"/>
</dbReference>
<dbReference type="InterPro" id="IPR034737">
    <property type="entry name" value="TCTP"/>
</dbReference>
<dbReference type="InterPro" id="IPR018103">
    <property type="entry name" value="Translation_control_tumour_CS"/>
</dbReference>
<dbReference type="InterPro" id="IPR018105">
    <property type="entry name" value="Translational_control_tumour_p"/>
</dbReference>
<dbReference type="PANTHER" id="PTHR11991">
    <property type="entry name" value="TRANSLATIONALLY CONTROLLED TUMOR PROTEIN-RELATED"/>
    <property type="match status" value="1"/>
</dbReference>
<dbReference type="PANTHER" id="PTHR11991:SF0">
    <property type="entry name" value="TRANSLATIONALLY-CONTROLLED TUMOR PROTEIN"/>
    <property type="match status" value="1"/>
</dbReference>
<dbReference type="Pfam" id="PF00838">
    <property type="entry name" value="TCTP"/>
    <property type="match status" value="1"/>
</dbReference>
<dbReference type="PRINTS" id="PR01653">
    <property type="entry name" value="TCTPROTEIN"/>
</dbReference>
<dbReference type="SUPFAM" id="SSF51316">
    <property type="entry name" value="Mss4-like"/>
    <property type="match status" value="1"/>
</dbReference>
<dbReference type="PROSITE" id="PS01003">
    <property type="entry name" value="TCTP_2"/>
    <property type="match status" value="1"/>
</dbReference>
<dbReference type="PROSITE" id="PS51797">
    <property type="entry name" value="TCTP_3"/>
    <property type="match status" value="1"/>
</dbReference>
<evidence type="ECO:0000250" key="1"/>
<evidence type="ECO:0000255" key="2">
    <source>
        <dbReference type="PROSITE-ProRule" id="PRU01133"/>
    </source>
</evidence>
<protein>
    <recommendedName>
        <fullName>Translationally-controlled tumor protein homolog</fullName>
        <shortName>TCTP</shortName>
    </recommendedName>
</protein>
<name>TCTP_SCOMX</name>
<reference key="1">
    <citation type="submission" date="2006-02" db="EMBL/GenBank/DDBJ databases">
        <title>Isolation and characterization of a full-length cDNA encoding translationally controlled tumor protein (TCTP) from flatfish turbot Scophthalmus maximus.</title>
        <authorList>
            <person name="Wang J."/>
            <person name="Guo H."/>
            <person name="Qi F."/>
            <person name="Yin L."/>
            <person name="Zhang S."/>
        </authorList>
    </citation>
    <scope>NUCLEOTIDE SEQUENCE [MRNA]</scope>
</reference>
<organism>
    <name type="scientific">Scophthalmus maximus</name>
    <name type="common">Turbot</name>
    <name type="synonym">Psetta maxima</name>
    <dbReference type="NCBI Taxonomy" id="52904"/>
    <lineage>
        <taxon>Eukaryota</taxon>
        <taxon>Metazoa</taxon>
        <taxon>Chordata</taxon>
        <taxon>Craniata</taxon>
        <taxon>Vertebrata</taxon>
        <taxon>Euteleostomi</taxon>
        <taxon>Actinopterygii</taxon>
        <taxon>Neopterygii</taxon>
        <taxon>Teleostei</taxon>
        <taxon>Neoteleostei</taxon>
        <taxon>Acanthomorphata</taxon>
        <taxon>Carangaria</taxon>
        <taxon>Pleuronectiformes</taxon>
        <taxon>Pleuronectoidei</taxon>
        <taxon>Scophthalmidae</taxon>
        <taxon>Scophthalmus</taxon>
    </lineage>
</organism>
<feature type="chain" id="PRO_0000252302" description="Translationally-controlled tumor protein homolog">
    <location>
        <begin position="1"/>
        <end position="170"/>
    </location>
</feature>
<feature type="domain" description="TCTP" evidence="2">
    <location>
        <begin position="1"/>
        <end position="170"/>
    </location>
</feature>
<comment type="function">
    <text evidence="1">Involved in calcium binding and microtubule stabilization.</text>
</comment>
<comment type="subcellular location">
    <subcellularLocation>
        <location evidence="1">Cytoplasm</location>
    </subcellularLocation>
</comment>
<comment type="similarity">
    <text evidence="2">Belongs to the TCTP family.</text>
</comment>
<sequence length="170" mass="19097">MIIYKDLLSGDEMFSNIYKIRELEGGILLEVEGKRITRTEAIDDSAFGANPSAEELSEANEAAVSSGVDIILNHKLISTLYNKKQYSAYIKKYMKDLKTKLEETNPERVDAFVAGAVGAVKMILGKFKDFEFYTGESMNHDAMVGLLDYREDGITPIMLFFKDGLEIEKC</sequence>
<gene>
    <name type="primary">tpt1</name>
    <name type="synonym">tctp</name>
</gene>
<keyword id="KW-0106">Calcium</keyword>
<keyword id="KW-0963">Cytoplasm</keyword>